<organism>
    <name type="scientific">Acinetobacter baumannii (strain AYE)</name>
    <dbReference type="NCBI Taxonomy" id="509173"/>
    <lineage>
        <taxon>Bacteria</taxon>
        <taxon>Pseudomonadati</taxon>
        <taxon>Pseudomonadota</taxon>
        <taxon>Gammaproteobacteria</taxon>
        <taxon>Moraxellales</taxon>
        <taxon>Moraxellaceae</taxon>
        <taxon>Acinetobacter</taxon>
        <taxon>Acinetobacter calcoaceticus/baumannii complex</taxon>
    </lineage>
</organism>
<evidence type="ECO:0000255" key="1">
    <source>
        <dbReference type="HAMAP-Rule" id="MF_00655"/>
    </source>
</evidence>
<dbReference type="EMBL" id="CU459141">
    <property type="protein sequence ID" value="CAM86761.1"/>
    <property type="molecule type" value="Genomic_DNA"/>
</dbReference>
<dbReference type="RefSeq" id="WP_001031363.1">
    <property type="nucleotide sequence ID" value="NZ_JBDGFB010000001.1"/>
</dbReference>
<dbReference type="SMR" id="B0V495"/>
<dbReference type="EnsemblBacteria" id="CAM86761">
    <property type="protein sequence ID" value="CAM86761"/>
    <property type="gene ID" value="ABAYE1879"/>
</dbReference>
<dbReference type="KEGG" id="aby:ABAYE1879"/>
<dbReference type="HOGENOM" id="CLU_163864_2_1_6"/>
<dbReference type="UniPathway" id="UPA00539"/>
<dbReference type="GO" id="GO:0048038">
    <property type="term" value="F:quinone binding"/>
    <property type="evidence" value="ECO:0007669"/>
    <property type="project" value="InterPro"/>
</dbReference>
<dbReference type="GO" id="GO:0018189">
    <property type="term" value="P:pyrroloquinoline quinone biosynthetic process"/>
    <property type="evidence" value="ECO:0007669"/>
    <property type="project" value="UniProtKB-UniRule"/>
</dbReference>
<dbReference type="Gene3D" id="1.10.10.1150">
    <property type="entry name" value="Coenzyme PQQ synthesis protein D (PqqD)"/>
    <property type="match status" value="1"/>
</dbReference>
<dbReference type="HAMAP" id="MF_00655">
    <property type="entry name" value="PQQ_syn_PqqD"/>
    <property type="match status" value="1"/>
</dbReference>
<dbReference type="InterPro" id="IPR008792">
    <property type="entry name" value="PQQD"/>
</dbReference>
<dbReference type="InterPro" id="IPR022479">
    <property type="entry name" value="PqqD_bac"/>
</dbReference>
<dbReference type="InterPro" id="IPR041881">
    <property type="entry name" value="PqqD_sf"/>
</dbReference>
<dbReference type="NCBIfam" id="TIGR03859">
    <property type="entry name" value="PQQ_PqqD"/>
    <property type="match status" value="1"/>
</dbReference>
<dbReference type="NCBIfam" id="NF002535">
    <property type="entry name" value="PRK02079.1"/>
    <property type="match status" value="1"/>
</dbReference>
<dbReference type="Pfam" id="PF05402">
    <property type="entry name" value="PqqD"/>
    <property type="match status" value="1"/>
</dbReference>
<sequence length="94" mass="10761">MNKEQFDVNLVPTWRQGYRFQFEPAQNGFVILYPEGMIKLNESAGAIGQYIDGTNNVSAIIAQLKQQFGDIPEIDNDVIDYMLVAQQQHWIDLV</sequence>
<feature type="chain" id="PRO_1000131187" description="PqqA binding protein">
    <location>
        <begin position="1"/>
        <end position="94"/>
    </location>
</feature>
<keyword id="KW-0884">PQQ biosynthesis</keyword>
<accession>B0V495</accession>
<comment type="function">
    <text evidence="1">Functions as a PqqA binding protein and presents PqqA to PqqE, in the pyrroloquinoline quinone (PQQ) biosynthetic pathway.</text>
</comment>
<comment type="pathway">
    <text evidence="1">Cofactor biosynthesis; pyrroloquinoline quinone biosynthesis.</text>
</comment>
<comment type="subunit">
    <text evidence="1">Monomer. Interacts with PqqE.</text>
</comment>
<comment type="similarity">
    <text evidence="1">Belongs to the PqqD family.</text>
</comment>
<gene>
    <name evidence="1" type="primary">pqqD</name>
    <name type="ordered locus">ABAYE1879</name>
</gene>
<reference key="1">
    <citation type="journal article" date="2008" name="PLoS ONE">
        <title>Comparative analysis of Acinetobacters: three genomes for three lifestyles.</title>
        <authorList>
            <person name="Vallenet D."/>
            <person name="Nordmann P."/>
            <person name="Barbe V."/>
            <person name="Poirel L."/>
            <person name="Mangenot S."/>
            <person name="Bataille E."/>
            <person name="Dossat C."/>
            <person name="Gas S."/>
            <person name="Kreimeyer A."/>
            <person name="Lenoble P."/>
            <person name="Oztas S."/>
            <person name="Poulain J."/>
            <person name="Segurens B."/>
            <person name="Robert C."/>
            <person name="Abergel C."/>
            <person name="Claverie J.-M."/>
            <person name="Raoult D."/>
            <person name="Medigue C."/>
            <person name="Weissenbach J."/>
            <person name="Cruveiller S."/>
        </authorList>
    </citation>
    <scope>NUCLEOTIDE SEQUENCE [LARGE SCALE GENOMIC DNA]</scope>
    <source>
        <strain>AYE</strain>
    </source>
</reference>
<protein>
    <recommendedName>
        <fullName evidence="1">PqqA binding protein</fullName>
    </recommendedName>
    <alternativeName>
        <fullName evidence="1">Coenzyme PQQ synthesis protein D</fullName>
    </alternativeName>
    <alternativeName>
        <fullName evidence="1">Pyrroloquinoline quinone biosynthesis protein D</fullName>
    </alternativeName>
</protein>
<proteinExistence type="inferred from homology"/>
<name>PQQD_ACIBY</name>